<evidence type="ECO:0000255" key="1">
    <source>
        <dbReference type="HAMAP-Rule" id="MF_00050"/>
    </source>
</evidence>
<feature type="chain" id="PRO_1000006081" description="Elongation factor Ts">
    <location>
        <begin position="1"/>
        <end position="303"/>
    </location>
</feature>
<feature type="region of interest" description="Involved in Mg(2+) ion dislocation from EF-Tu" evidence="1">
    <location>
        <begin position="80"/>
        <end position="83"/>
    </location>
</feature>
<name>EFTS_CLOP1</name>
<proteinExistence type="inferred from homology"/>
<dbReference type="EMBL" id="CP000246">
    <property type="protein sequence ID" value="ABG84660.1"/>
    <property type="molecule type" value="Genomic_DNA"/>
</dbReference>
<dbReference type="RefSeq" id="WP_003459744.1">
    <property type="nucleotide sequence ID" value="NC_008261.1"/>
</dbReference>
<dbReference type="SMR" id="Q0TPQ4"/>
<dbReference type="STRING" id="195103.CPF_1953"/>
<dbReference type="PaxDb" id="195103-CPF_1953"/>
<dbReference type="GeneID" id="93001763"/>
<dbReference type="KEGG" id="cpf:CPF_1953"/>
<dbReference type="eggNOG" id="COG0264">
    <property type="taxonomic scope" value="Bacteria"/>
</dbReference>
<dbReference type="HOGENOM" id="CLU_047155_2_0_9"/>
<dbReference type="Proteomes" id="UP000001823">
    <property type="component" value="Chromosome"/>
</dbReference>
<dbReference type="GO" id="GO:0005737">
    <property type="term" value="C:cytoplasm"/>
    <property type="evidence" value="ECO:0007669"/>
    <property type="project" value="UniProtKB-SubCell"/>
</dbReference>
<dbReference type="GO" id="GO:0003746">
    <property type="term" value="F:translation elongation factor activity"/>
    <property type="evidence" value="ECO:0007669"/>
    <property type="project" value="UniProtKB-UniRule"/>
</dbReference>
<dbReference type="CDD" id="cd14275">
    <property type="entry name" value="UBA_EF-Ts"/>
    <property type="match status" value="1"/>
</dbReference>
<dbReference type="FunFam" id="1.10.286.20:FF:000001">
    <property type="entry name" value="Elongation factor Ts"/>
    <property type="match status" value="1"/>
</dbReference>
<dbReference type="FunFam" id="1.10.8.10:FF:000001">
    <property type="entry name" value="Elongation factor Ts"/>
    <property type="match status" value="1"/>
</dbReference>
<dbReference type="Gene3D" id="1.10.286.20">
    <property type="match status" value="1"/>
</dbReference>
<dbReference type="Gene3D" id="1.10.8.10">
    <property type="entry name" value="DNA helicase RuvA subunit, C-terminal domain"/>
    <property type="match status" value="1"/>
</dbReference>
<dbReference type="Gene3D" id="3.30.479.20">
    <property type="entry name" value="Elongation factor Ts, dimerisation domain"/>
    <property type="match status" value="2"/>
</dbReference>
<dbReference type="HAMAP" id="MF_00050">
    <property type="entry name" value="EF_Ts"/>
    <property type="match status" value="1"/>
</dbReference>
<dbReference type="InterPro" id="IPR036402">
    <property type="entry name" value="EF-Ts_dimer_sf"/>
</dbReference>
<dbReference type="InterPro" id="IPR001816">
    <property type="entry name" value="Transl_elong_EFTs/EF1B"/>
</dbReference>
<dbReference type="InterPro" id="IPR014039">
    <property type="entry name" value="Transl_elong_EFTs/EF1B_dimer"/>
</dbReference>
<dbReference type="InterPro" id="IPR018101">
    <property type="entry name" value="Transl_elong_Ts_CS"/>
</dbReference>
<dbReference type="InterPro" id="IPR009060">
    <property type="entry name" value="UBA-like_sf"/>
</dbReference>
<dbReference type="NCBIfam" id="TIGR00116">
    <property type="entry name" value="tsf"/>
    <property type="match status" value="1"/>
</dbReference>
<dbReference type="PANTHER" id="PTHR11741">
    <property type="entry name" value="ELONGATION FACTOR TS"/>
    <property type="match status" value="1"/>
</dbReference>
<dbReference type="PANTHER" id="PTHR11741:SF0">
    <property type="entry name" value="ELONGATION FACTOR TS, MITOCHONDRIAL"/>
    <property type="match status" value="1"/>
</dbReference>
<dbReference type="Pfam" id="PF00889">
    <property type="entry name" value="EF_TS"/>
    <property type="match status" value="1"/>
</dbReference>
<dbReference type="SUPFAM" id="SSF54713">
    <property type="entry name" value="Elongation factor Ts (EF-Ts), dimerisation domain"/>
    <property type="match status" value="2"/>
</dbReference>
<dbReference type="SUPFAM" id="SSF46934">
    <property type="entry name" value="UBA-like"/>
    <property type="match status" value="1"/>
</dbReference>
<dbReference type="PROSITE" id="PS01126">
    <property type="entry name" value="EF_TS_1"/>
    <property type="match status" value="1"/>
</dbReference>
<dbReference type="PROSITE" id="PS01127">
    <property type="entry name" value="EF_TS_2"/>
    <property type="match status" value="1"/>
</dbReference>
<reference key="1">
    <citation type="journal article" date="2006" name="Genome Res.">
        <title>Skewed genomic variability in strains of the toxigenic bacterial pathogen, Clostridium perfringens.</title>
        <authorList>
            <person name="Myers G.S.A."/>
            <person name="Rasko D.A."/>
            <person name="Cheung J.K."/>
            <person name="Ravel J."/>
            <person name="Seshadri R."/>
            <person name="DeBoy R.T."/>
            <person name="Ren Q."/>
            <person name="Varga J."/>
            <person name="Awad M.M."/>
            <person name="Brinkac L.M."/>
            <person name="Daugherty S.C."/>
            <person name="Haft D.H."/>
            <person name="Dodson R.J."/>
            <person name="Madupu R."/>
            <person name="Nelson W.C."/>
            <person name="Rosovitz M.J."/>
            <person name="Sullivan S.A."/>
            <person name="Khouri H."/>
            <person name="Dimitrov G.I."/>
            <person name="Watkins K.L."/>
            <person name="Mulligan S."/>
            <person name="Benton J."/>
            <person name="Radune D."/>
            <person name="Fisher D.J."/>
            <person name="Atkins H.S."/>
            <person name="Hiscox T."/>
            <person name="Jost B.H."/>
            <person name="Billington S.J."/>
            <person name="Songer J.G."/>
            <person name="McClane B.A."/>
            <person name="Titball R.W."/>
            <person name="Rood J.I."/>
            <person name="Melville S.B."/>
            <person name="Paulsen I.T."/>
        </authorList>
    </citation>
    <scope>NUCLEOTIDE SEQUENCE [LARGE SCALE GENOMIC DNA]</scope>
    <source>
        <strain>ATCC 13124 / DSM 756 / JCM 1290 / NCIMB 6125 / NCTC 8237 / S 107 / Type A</strain>
    </source>
</reference>
<gene>
    <name evidence="1" type="primary">tsf</name>
    <name type="ordered locus">CPF_1953</name>
</gene>
<comment type="function">
    <text evidence="1">Associates with the EF-Tu.GDP complex and induces the exchange of GDP to GTP. It remains bound to the aminoacyl-tRNA.EF-Tu.GTP complex up to the GTP hydrolysis stage on the ribosome.</text>
</comment>
<comment type="subcellular location">
    <subcellularLocation>
        <location evidence="1">Cytoplasm</location>
    </subcellularLocation>
</comment>
<comment type="similarity">
    <text evidence="1">Belongs to the EF-Ts family.</text>
</comment>
<keyword id="KW-0963">Cytoplasm</keyword>
<keyword id="KW-0251">Elongation factor</keyword>
<keyword id="KW-0648">Protein biosynthesis</keyword>
<accession>Q0TPQ4</accession>
<protein>
    <recommendedName>
        <fullName evidence="1">Elongation factor Ts</fullName>
        <shortName evidence="1">EF-Ts</shortName>
    </recommendedName>
</protein>
<organism>
    <name type="scientific">Clostridium perfringens (strain ATCC 13124 / DSM 756 / JCM 1290 / NCIMB 6125 / NCTC 8237 / Type A)</name>
    <dbReference type="NCBI Taxonomy" id="195103"/>
    <lineage>
        <taxon>Bacteria</taxon>
        <taxon>Bacillati</taxon>
        <taxon>Bacillota</taxon>
        <taxon>Clostridia</taxon>
        <taxon>Eubacteriales</taxon>
        <taxon>Clostridiaceae</taxon>
        <taxon>Clostridium</taxon>
    </lineage>
</organism>
<sequence length="303" mass="33187">MITAKAVKELRERTGAGMMDCKKALTETNGDMEKAVEVLREKGLAAAAKKAGRVAAEGIVKTYVSEDMKKGSIVEINCETDFVALNEEFVGFAGRVAELVANSNVNTVEELLAEKLDGDKTVQEVLTELIAKIGENMSVRRFERFSVESGLVQSYIHGGGRIGVMAELACEASSPVLAEVAKDVCMQIAAANPLFLSEADVDQESLEKEKEIYRAQALNEGKPEHIVDKMVMGRIKKYCKEVCLLDQAWVKDGDKSIAKLLEEKSKEVGSPITITKFVRFERGEGIEKKEENFAEEVAKMGGK</sequence>